<sequence>MATTGTTSMPAPVFHPTVWGDYFIKFVPEPLQVSDETMAERIRHLREEVSGMFQACKNVVDKTNLVDVVQRLGIDHHFEEQIATALASIHSAGLFNSSSLHEAALRFRLLRQQGFWVPADELVKFIKNEDGSFIDGITNDPKGLLSLYNAAHLVTHDEGTTTLEDAIAFARQHLEAARRCSLKSPLAEQVGRALGIPLPRTLKREEAIAFIPEYSSQQDQQVYSPVILELAKLDFNLLQHLHQEELKEISQWWKDLSGEIGLGYVRDRIVECYFWSYTVHYERGQARARMILAKVFMLTSLLDDTYDVHATLEEARELNKAIQRWDESDVSLLPEYLKKFFVKVISNFREFEDELESHEKYRNVYNIKGFQTLSKHYLQEAEWFHHGCTPSFKDQVNVSVITGGAQVLSIGLLVGMGHEATREAFEWAIGDTDAIWACGEVSRFMDDMSAFKNGRNKMDVASSVECYIKEHNVPSEVALARINSLVEDAWKTINQAPFKYPALFPVVQRVTSLAKSMTLLFLDKRDAYTYSKDFQTTLETHFVRHIPL</sequence>
<organism>
    <name type="scientific">Zea mays</name>
    <name type="common">Maize</name>
    <dbReference type="NCBI Taxonomy" id="4577"/>
    <lineage>
        <taxon>Eukaryota</taxon>
        <taxon>Viridiplantae</taxon>
        <taxon>Streptophyta</taxon>
        <taxon>Embryophyta</taxon>
        <taxon>Tracheophyta</taxon>
        <taxon>Spermatophyta</taxon>
        <taxon>Magnoliopsida</taxon>
        <taxon>Liliopsida</taxon>
        <taxon>Poales</taxon>
        <taxon>Poaceae</taxon>
        <taxon>PACMAD clade</taxon>
        <taxon>Panicoideae</taxon>
        <taxon>Andropogonodae</taxon>
        <taxon>Andropogoneae</taxon>
        <taxon>Tripsacinae</taxon>
        <taxon>Zea</taxon>
    </lineage>
</organism>
<proteinExistence type="evidence at protein level"/>
<evidence type="ECO:0000250" key="1">
    <source>
        <dbReference type="UniProtKB" id="A0A1C9J6A7"/>
    </source>
</evidence>
<evidence type="ECO:0000250" key="2">
    <source>
        <dbReference type="UniProtKB" id="Q40577"/>
    </source>
</evidence>
<evidence type="ECO:0000250" key="3">
    <source>
        <dbReference type="UniProtKB" id="Q6JD73"/>
    </source>
</evidence>
<evidence type="ECO:0000250" key="4">
    <source>
        <dbReference type="UniProtKB" id="Q6Q3H2"/>
    </source>
</evidence>
<evidence type="ECO:0000269" key="5">
    <source>
    </source>
</evidence>
<evidence type="ECO:0000303" key="6">
    <source>
    </source>
</evidence>
<evidence type="ECO:0000303" key="7">
    <source ref="1"/>
</evidence>
<evidence type="ECO:0000305" key="8"/>
<evidence type="ECO:0000305" key="9">
    <source>
    </source>
</evidence>
<evidence type="ECO:0000312" key="10">
    <source>
        <dbReference type="EMBL" id="ONM04668.1"/>
    </source>
</evidence>
<gene>
    <name evidence="7" type="primary">TPS7</name>
    <name evidence="10" type="ORF">ZEAMMB73_Zm00001d032230</name>
</gene>
<protein>
    <recommendedName>
        <fullName evidence="6">Tau-cadinol synthase</fullName>
        <ecNumber evidence="5">4.2.3.173</ecNumber>
    </recommendedName>
    <alternativeName>
        <fullName evidence="7">Terpene synthase 7</fullName>
        <shortName evidence="6">ZmTPS7</shortName>
    </alternativeName>
</protein>
<reference key="1">
    <citation type="submission" date="2004-01" db="EMBL/GenBank/DDBJ databases">
        <title>Evolution and functional diversity of the terpene synthase family in maize.</title>
        <authorList>
            <person name="Koellner T.G."/>
            <person name="Schnee C."/>
            <person name="Gershenzon J."/>
            <person name="Degenhardt J."/>
        </authorList>
    </citation>
    <scope>NUCLEOTIDE SEQUENCE [MRNA]</scope>
    <source>
        <strain>cv. B73</strain>
    </source>
</reference>
<reference key="2">
    <citation type="journal article" date="2009" name="Science">
        <title>The B73 maize genome: complexity, diversity, and dynamics.</title>
        <authorList>
            <person name="Schnable P.S."/>
            <person name="Ware D."/>
            <person name="Fulton R.S."/>
            <person name="Stein J.C."/>
            <person name="Wei F."/>
            <person name="Pasternak S."/>
            <person name="Liang C."/>
            <person name="Zhang J."/>
            <person name="Fulton L."/>
            <person name="Graves T.A."/>
            <person name="Minx P."/>
            <person name="Reily A.D."/>
            <person name="Courtney L."/>
            <person name="Kruchowski S.S."/>
            <person name="Tomlinson C."/>
            <person name="Strong C."/>
            <person name="Delehaunty K."/>
            <person name="Fronick C."/>
            <person name="Courtney B."/>
            <person name="Rock S.M."/>
            <person name="Belter E."/>
            <person name="Du F."/>
            <person name="Kim K."/>
            <person name="Abbott R.M."/>
            <person name="Cotton M."/>
            <person name="Levy A."/>
            <person name="Marchetto P."/>
            <person name="Ochoa K."/>
            <person name="Jackson S.M."/>
            <person name="Gillam B."/>
            <person name="Chen W."/>
            <person name="Yan L."/>
            <person name="Higginbotham J."/>
            <person name="Cardenas M."/>
            <person name="Waligorski J."/>
            <person name="Applebaum E."/>
            <person name="Phelps L."/>
            <person name="Falcone J."/>
            <person name="Kanchi K."/>
            <person name="Thane T."/>
            <person name="Scimone A."/>
            <person name="Thane N."/>
            <person name="Henke J."/>
            <person name="Wang T."/>
            <person name="Ruppert J."/>
            <person name="Shah N."/>
            <person name="Rotter K."/>
            <person name="Hodges J."/>
            <person name="Ingenthron E."/>
            <person name="Cordes M."/>
            <person name="Kohlberg S."/>
            <person name="Sgro J."/>
            <person name="Delgado B."/>
            <person name="Mead K."/>
            <person name="Chinwalla A."/>
            <person name="Leonard S."/>
            <person name="Crouse K."/>
            <person name="Collura K."/>
            <person name="Kudrna D."/>
            <person name="Currie J."/>
            <person name="He R."/>
            <person name="Angelova A."/>
            <person name="Rajasekar S."/>
            <person name="Mueller T."/>
            <person name="Lomeli R."/>
            <person name="Scara G."/>
            <person name="Ko A."/>
            <person name="Delaney K."/>
            <person name="Wissotski M."/>
            <person name="Lopez G."/>
            <person name="Campos D."/>
            <person name="Braidotti M."/>
            <person name="Ashley E."/>
            <person name="Golser W."/>
            <person name="Kim H."/>
            <person name="Lee S."/>
            <person name="Lin J."/>
            <person name="Dujmic Z."/>
            <person name="Kim W."/>
            <person name="Talag J."/>
            <person name="Zuccolo A."/>
            <person name="Fan C."/>
            <person name="Sebastian A."/>
            <person name="Kramer M."/>
            <person name="Spiegel L."/>
            <person name="Nascimento L."/>
            <person name="Zutavern T."/>
            <person name="Miller B."/>
            <person name="Ambroise C."/>
            <person name="Muller S."/>
            <person name="Spooner W."/>
            <person name="Narechania A."/>
            <person name="Ren L."/>
            <person name="Wei S."/>
            <person name="Kumari S."/>
            <person name="Faga B."/>
            <person name="Levy M.J."/>
            <person name="McMahan L."/>
            <person name="Van Buren P."/>
            <person name="Vaughn M.W."/>
            <person name="Ying K."/>
            <person name="Yeh C.-T."/>
            <person name="Emrich S.J."/>
            <person name="Jia Y."/>
            <person name="Kalyanaraman A."/>
            <person name="Hsia A.-P."/>
            <person name="Barbazuk W.B."/>
            <person name="Baucom R.S."/>
            <person name="Brutnell T.P."/>
            <person name="Carpita N.C."/>
            <person name="Chaparro C."/>
            <person name="Chia J.-M."/>
            <person name="Deragon J.-M."/>
            <person name="Estill J.C."/>
            <person name="Fu Y."/>
            <person name="Jeddeloh J.A."/>
            <person name="Han Y."/>
            <person name="Lee H."/>
            <person name="Li P."/>
            <person name="Lisch D.R."/>
            <person name="Liu S."/>
            <person name="Liu Z."/>
            <person name="Nagel D.H."/>
            <person name="McCann M.C."/>
            <person name="SanMiguel P."/>
            <person name="Myers A.M."/>
            <person name="Nettleton D."/>
            <person name="Nguyen J."/>
            <person name="Penning B.W."/>
            <person name="Ponnala L."/>
            <person name="Schneider K.L."/>
            <person name="Schwartz D.C."/>
            <person name="Sharma A."/>
            <person name="Soderlund C."/>
            <person name="Springer N.M."/>
            <person name="Sun Q."/>
            <person name="Wang H."/>
            <person name="Waterman M."/>
            <person name="Westerman R."/>
            <person name="Wolfgruber T.K."/>
            <person name="Yang L."/>
            <person name="Yu Y."/>
            <person name="Zhang L."/>
            <person name="Zhou S."/>
            <person name="Zhu Q."/>
            <person name="Bennetzen J.L."/>
            <person name="Dawe R.K."/>
            <person name="Jiang J."/>
            <person name="Jiang N."/>
            <person name="Presting G.G."/>
            <person name="Wessler S.R."/>
            <person name="Aluru S."/>
            <person name="Martienssen R.A."/>
            <person name="Clifton S.W."/>
            <person name="McCombie W.R."/>
            <person name="Wing R.A."/>
            <person name="Wilson R.K."/>
        </authorList>
    </citation>
    <scope>NUCLEOTIDE SEQUENCE [LARGE SCALE GENOMIC DNA]</scope>
    <scope>IDENTIFICATION</scope>
    <source>
        <strain>cv. B73</strain>
        <tissue>Seedling</tissue>
    </source>
</reference>
<reference key="3">
    <citation type="journal article" date="2009" name="Plant Mol. Biol.">
        <title>Insights into corn genes derived from large-scale cDNA sequencing.</title>
        <authorList>
            <person name="Alexandrov N.N."/>
            <person name="Brover V.V."/>
            <person name="Freidin S."/>
            <person name="Troukhan M.E."/>
            <person name="Tatarinova T.V."/>
            <person name="Zhang H."/>
            <person name="Swaller T.J."/>
            <person name="Lu Y.-P."/>
            <person name="Bouck J."/>
            <person name="Flavell R.B."/>
            <person name="Feldmann K.A."/>
        </authorList>
    </citation>
    <scope>NUCLEOTIDE SEQUENCE [LARGE SCALE MRNA]</scope>
</reference>
<reference key="4">
    <citation type="journal article" date="2016" name="Planta">
        <title>Functional characterization of ZmTPS7 reveals a maize tau-cadinol synthase involved in stress response.</title>
        <authorList>
            <person name="Ren F."/>
            <person name="Mao H."/>
            <person name="Liang J."/>
            <person name="Liu J."/>
            <person name="Shu K."/>
            <person name="Wang Q."/>
        </authorList>
    </citation>
    <scope>FUNCTION</scope>
    <scope>CATALYTIC ACTIVITY</scope>
    <scope>TISSUE SPECIFICITY</scope>
    <scope>INDUCTION BY ABSCISIC ACID; FUNGUS SPORE AND METHYL JASMONATE</scope>
    <scope>BIOPHYSICOCHEMICAL PROPERTIES</scope>
    <scope>COFACTOR</scope>
    <source>
        <strain>cv. Missouri 17</strain>
    </source>
</reference>
<reference key="5">
    <citation type="journal article" date="2019" name="Planta">
        <title>Biosynthesis and function of terpenoid defense compounds in maize (Zea mays).</title>
        <authorList>
            <person name="Block A.K."/>
            <person name="Vaughan M.M."/>
            <person name="Schmelz E.A."/>
            <person name="Christensen S.A."/>
        </authorList>
    </citation>
    <scope>REVIEW</scope>
</reference>
<name>TPS7_MAIZE</name>
<keyword id="KW-0963">Cytoplasm</keyword>
<keyword id="KW-0456">Lyase</keyword>
<keyword id="KW-0460">Magnesium</keyword>
<keyword id="KW-0464">Manganese</keyword>
<keyword id="KW-0479">Metal-binding</keyword>
<keyword id="KW-1185">Reference proteome</keyword>
<accession>Q5GJ59</accession>
<accession>A0A1D6KPD6</accession>
<accession>B6SPA6</accession>
<comment type="function">
    <text evidence="5">Sesquiterpene synthase that catalyzes the formation of a blend of sesquiterpenes and sesquiterpenoid alcohols (PubMed:27421723). Converts farnesyl diphosphate to tau-cadinol (PubMed:27421723).</text>
</comment>
<comment type="catalytic activity">
    <reaction evidence="5">
        <text>(2E,6E)-farnesyl diphosphate + H2O = tau-cadinol + diphosphate</text>
        <dbReference type="Rhea" id="RHEA:54052"/>
        <dbReference type="ChEBI" id="CHEBI:15377"/>
        <dbReference type="ChEBI" id="CHEBI:33019"/>
        <dbReference type="ChEBI" id="CHEBI:138042"/>
        <dbReference type="ChEBI" id="CHEBI:175763"/>
        <dbReference type="EC" id="4.2.3.173"/>
    </reaction>
    <physiologicalReaction direction="left-to-right" evidence="5">
        <dbReference type="Rhea" id="RHEA:54053"/>
    </physiologicalReaction>
</comment>
<comment type="cofactor">
    <cofactor evidence="5">
        <name>Mg(2+)</name>
        <dbReference type="ChEBI" id="CHEBI:18420"/>
    </cofactor>
    <cofactor evidence="3">
        <name>Mn(2+)</name>
        <dbReference type="ChEBI" id="CHEBI:29035"/>
    </cofactor>
</comment>
<comment type="biophysicochemical properties">
    <kinetics>
        <KM evidence="5">6.5 uM for (2E,6E)-farnesyl diphosphate</KM>
        <text evidence="5">kcat is 0.00136 sec(-1) with (2E,6E)-farnesyl diphosphate as substrate.</text>
    </kinetics>
    <phDependence>
        <text evidence="5">Optimum pH is 8.</text>
    </phDependence>
</comment>
<comment type="pathway">
    <text evidence="9">Secondary metabolite biosynthesis; terpenoid biosynthesis.</text>
</comment>
<comment type="subunit">
    <text evidence="3">Monomer.</text>
</comment>
<comment type="subcellular location">
    <subcellularLocation>
        <location evidence="4">Cytoplasm</location>
    </subcellularLocation>
</comment>
<comment type="tissue specificity">
    <text evidence="5">Constitutively expressed in aerial tissues, but barely observed in roots.</text>
</comment>
<comment type="induction">
    <text evidence="5">Induced by fungus spore (F.graminearum) inoculation and methyl jasmonate (MeJA) treatment in leaves (PubMed:27421723). Triggered by abscisic acid (ABA) in roots (PubMed:27421723).</text>
</comment>
<comment type="domain">
    <text evidence="1">The Asp-Asp-Xaa-Xaa-Asp/Glu (DDXXD/E) motif is important for the catalytic activity, presumably through binding to Mg(2+).</text>
</comment>
<comment type="similarity">
    <text evidence="8">Belongs to the terpene synthase family.</text>
</comment>
<comment type="sequence caution" evidence="8">
    <conflict type="erroneous gene model prediction">
        <sequence resource="EMBL-CDS" id="ONM04668"/>
    </conflict>
</comment>
<feature type="chain" id="PRO_0000447515" description="Tau-cadinol synthase">
    <location>
        <begin position="1"/>
        <end position="548"/>
    </location>
</feature>
<feature type="short sequence motif" description="DDXXD motif" evidence="1">
    <location>
        <begin position="303"/>
        <end position="307"/>
    </location>
</feature>
<feature type="binding site" evidence="2">
    <location>
        <position position="303"/>
    </location>
    <ligand>
        <name>Mg(2+)</name>
        <dbReference type="ChEBI" id="CHEBI:18420"/>
        <label>1</label>
    </ligand>
</feature>
<feature type="binding site" evidence="2">
    <location>
        <position position="303"/>
    </location>
    <ligand>
        <name>Mg(2+)</name>
        <dbReference type="ChEBI" id="CHEBI:18420"/>
        <label>2</label>
    </ligand>
</feature>
<feature type="binding site" evidence="1">
    <location>
        <position position="303"/>
    </location>
    <ligand>
        <name>substrate</name>
    </ligand>
</feature>
<feature type="binding site" evidence="2">
    <location>
        <position position="307"/>
    </location>
    <ligand>
        <name>Mg(2+)</name>
        <dbReference type="ChEBI" id="CHEBI:18420"/>
        <label>1</label>
    </ligand>
</feature>
<feature type="binding site" evidence="2">
    <location>
        <position position="307"/>
    </location>
    <ligand>
        <name>Mg(2+)</name>
        <dbReference type="ChEBI" id="CHEBI:18420"/>
        <label>2</label>
    </ligand>
</feature>
<feature type="binding site" evidence="1">
    <location>
        <position position="307"/>
    </location>
    <ligand>
        <name>substrate</name>
    </ligand>
</feature>
<feature type="binding site" evidence="1">
    <location>
        <position position="443"/>
    </location>
    <ligand>
        <name>substrate</name>
    </ligand>
</feature>
<feature type="sequence conflict" description="In Ref. 3; ACG26689." evidence="8" ref="3">
    <original>Y</original>
    <variation>YS</variation>
    <location>
        <position position="214"/>
    </location>
</feature>
<feature type="sequence conflict" description="In Ref. 3; ACG26689." evidence="8" ref="3">
    <original>H</original>
    <variation>R</variation>
    <location>
        <position position="240"/>
    </location>
</feature>
<feature type="sequence conflict" description="In Ref. 3; ACG26689." evidence="8" ref="3">
    <original>E</original>
    <variation>Q</variation>
    <location>
        <position position="487"/>
    </location>
</feature>
<dbReference type="EC" id="4.2.3.173" evidence="5"/>
<dbReference type="EMBL" id="AY518316">
    <property type="protein sequence ID" value="AAS88577.1"/>
    <property type="molecule type" value="mRNA"/>
</dbReference>
<dbReference type="EMBL" id="CM007647">
    <property type="protein sequence ID" value="ONM04668.1"/>
    <property type="status" value="ALT_SEQ"/>
    <property type="molecule type" value="Genomic_DNA"/>
</dbReference>
<dbReference type="EMBL" id="EU954571">
    <property type="protein sequence ID" value="ACG26689.1"/>
    <property type="molecule type" value="mRNA"/>
</dbReference>
<dbReference type="RefSeq" id="NP_001105249.1">
    <property type="nucleotide sequence ID" value="NM_001111779.1"/>
</dbReference>
<dbReference type="SMR" id="Q5GJ59"/>
<dbReference type="FunCoup" id="Q5GJ59">
    <property type="interactions" value="25"/>
</dbReference>
<dbReference type="STRING" id="4577.Q5GJ59"/>
<dbReference type="PaxDb" id="4577-AC217050.4_FGP007"/>
<dbReference type="EnsemblPlants" id="Zm00001eb041770_T001">
    <property type="protein sequence ID" value="Zm00001eb041770_P001"/>
    <property type="gene ID" value="Zm00001eb041770"/>
</dbReference>
<dbReference type="GeneID" id="542156"/>
<dbReference type="Gramene" id="Zm00001eb041770_T001">
    <property type="protein sequence ID" value="Zm00001eb041770_P001"/>
    <property type="gene ID" value="Zm00001eb041770"/>
</dbReference>
<dbReference type="KEGG" id="zma:542156"/>
<dbReference type="MaizeGDB" id="9035353"/>
<dbReference type="eggNOG" id="ENOG502QUCN">
    <property type="taxonomic scope" value="Eukaryota"/>
</dbReference>
<dbReference type="HOGENOM" id="CLU_003125_7_0_1"/>
<dbReference type="InParanoid" id="Q5GJ59"/>
<dbReference type="OrthoDB" id="1877784at2759"/>
<dbReference type="BRENDA" id="4.2.3.173">
    <property type="organism ID" value="6752"/>
</dbReference>
<dbReference type="UniPathway" id="UPA00213"/>
<dbReference type="Proteomes" id="UP000007305">
    <property type="component" value="Chromosome 1"/>
</dbReference>
<dbReference type="ExpressionAtlas" id="Q5GJ59">
    <property type="expression patterns" value="baseline and differential"/>
</dbReference>
<dbReference type="GO" id="GO:0005737">
    <property type="term" value="C:cytoplasm"/>
    <property type="evidence" value="ECO:0007669"/>
    <property type="project" value="UniProtKB-SubCell"/>
</dbReference>
<dbReference type="GO" id="GO:0000287">
    <property type="term" value="F:magnesium ion binding"/>
    <property type="evidence" value="ECO:0000314"/>
    <property type="project" value="UniProtKB"/>
</dbReference>
<dbReference type="GO" id="GO:0010333">
    <property type="term" value="F:terpene synthase activity"/>
    <property type="evidence" value="ECO:0000314"/>
    <property type="project" value="UniProtKB"/>
</dbReference>
<dbReference type="GO" id="GO:0016102">
    <property type="term" value="P:diterpenoid biosynthetic process"/>
    <property type="evidence" value="ECO:0007669"/>
    <property type="project" value="InterPro"/>
</dbReference>
<dbReference type="GO" id="GO:0009737">
    <property type="term" value="P:response to abscisic acid"/>
    <property type="evidence" value="ECO:0000270"/>
    <property type="project" value="UniProtKB"/>
</dbReference>
<dbReference type="GO" id="GO:0009620">
    <property type="term" value="P:response to fungus"/>
    <property type="evidence" value="ECO:0000270"/>
    <property type="project" value="UniProtKB"/>
</dbReference>
<dbReference type="GO" id="GO:0009753">
    <property type="term" value="P:response to jasmonic acid"/>
    <property type="evidence" value="ECO:0000270"/>
    <property type="project" value="UniProtKB"/>
</dbReference>
<dbReference type="GO" id="GO:0016114">
    <property type="term" value="P:terpenoid biosynthetic process"/>
    <property type="evidence" value="ECO:0000314"/>
    <property type="project" value="UniProtKB"/>
</dbReference>
<dbReference type="CDD" id="cd00684">
    <property type="entry name" value="Terpene_cyclase_plant_C1"/>
    <property type="match status" value="1"/>
</dbReference>
<dbReference type="FunFam" id="1.10.600.10:FF:000007">
    <property type="entry name" value="Isoprene synthase, chloroplastic"/>
    <property type="match status" value="1"/>
</dbReference>
<dbReference type="FunFam" id="1.50.10.130:FF:000006">
    <property type="entry name" value="Terpene synthase 7"/>
    <property type="match status" value="1"/>
</dbReference>
<dbReference type="Gene3D" id="1.10.600.10">
    <property type="entry name" value="Farnesyl Diphosphate Synthase"/>
    <property type="match status" value="1"/>
</dbReference>
<dbReference type="Gene3D" id="1.50.10.130">
    <property type="entry name" value="Terpene synthase, N-terminal domain"/>
    <property type="match status" value="1"/>
</dbReference>
<dbReference type="InterPro" id="IPR008949">
    <property type="entry name" value="Isoprenoid_synthase_dom_sf"/>
</dbReference>
<dbReference type="InterPro" id="IPR034741">
    <property type="entry name" value="Terpene_cyclase-like_1_C"/>
</dbReference>
<dbReference type="InterPro" id="IPR044814">
    <property type="entry name" value="Terpene_cyclase_plant_C1"/>
</dbReference>
<dbReference type="InterPro" id="IPR001906">
    <property type="entry name" value="Terpene_synth_N"/>
</dbReference>
<dbReference type="InterPro" id="IPR036965">
    <property type="entry name" value="Terpene_synth_N_sf"/>
</dbReference>
<dbReference type="InterPro" id="IPR050148">
    <property type="entry name" value="Terpene_synthase-like"/>
</dbReference>
<dbReference type="InterPro" id="IPR005630">
    <property type="entry name" value="Terpene_synthase_metal-bd"/>
</dbReference>
<dbReference type="InterPro" id="IPR008930">
    <property type="entry name" value="Terpenoid_cyclase/PrenylTrfase"/>
</dbReference>
<dbReference type="PANTHER" id="PTHR31225">
    <property type="entry name" value="OS04G0344100 PROTEIN-RELATED"/>
    <property type="match status" value="1"/>
</dbReference>
<dbReference type="PANTHER" id="PTHR31225:SF186">
    <property type="entry name" value="TAU-CADINOL SYNTHASE"/>
    <property type="match status" value="1"/>
</dbReference>
<dbReference type="Pfam" id="PF01397">
    <property type="entry name" value="Terpene_synth"/>
    <property type="match status" value="1"/>
</dbReference>
<dbReference type="Pfam" id="PF03936">
    <property type="entry name" value="Terpene_synth_C"/>
    <property type="match status" value="1"/>
</dbReference>
<dbReference type="SFLD" id="SFLDS00005">
    <property type="entry name" value="Isoprenoid_Synthase_Type_I"/>
    <property type="match status" value="1"/>
</dbReference>
<dbReference type="SFLD" id="SFLDG01019">
    <property type="entry name" value="Terpene_Cyclase_Like_1_C_Termi"/>
    <property type="match status" value="1"/>
</dbReference>
<dbReference type="SUPFAM" id="SSF48239">
    <property type="entry name" value="Terpenoid cyclases/Protein prenyltransferases"/>
    <property type="match status" value="1"/>
</dbReference>
<dbReference type="SUPFAM" id="SSF48576">
    <property type="entry name" value="Terpenoid synthases"/>
    <property type="match status" value="1"/>
</dbReference>